<protein>
    <recommendedName>
        <fullName>Transient receptor potential cation channel subfamily V member 1</fullName>
        <shortName>TrpV1</shortName>
    </recommendedName>
    <alternativeName>
        <fullName>Osm-9-like TRP channel 1</fullName>
        <shortName>OTRPC1</shortName>
    </alternativeName>
    <alternativeName>
        <fullName>Vanilloid receptor 1</fullName>
    </alternativeName>
</protein>
<gene>
    <name type="primary">Trpv1</name>
</gene>
<keyword id="KW-0040">ANK repeat</keyword>
<keyword id="KW-0067">ATP-binding</keyword>
<keyword id="KW-0106">Calcium</keyword>
<keyword id="KW-0107">Calcium channel</keyword>
<keyword id="KW-0109">Calcium transport</keyword>
<keyword id="KW-0112">Calmodulin-binding</keyword>
<keyword id="KW-1003">Cell membrane</keyword>
<keyword id="KW-0966">Cell projection</keyword>
<keyword id="KW-0325">Glycoprotein</keyword>
<keyword id="KW-0407">Ion channel</keyword>
<keyword id="KW-0406">Ion transport</keyword>
<keyword id="KW-0472">Membrane</keyword>
<keyword id="KW-0479">Metal-binding</keyword>
<keyword id="KW-0547">Nucleotide-binding</keyword>
<keyword id="KW-0597">Phosphoprotein</keyword>
<keyword id="KW-0628">Postsynaptic cell membrane</keyword>
<keyword id="KW-1185">Reference proteome</keyword>
<keyword id="KW-0677">Repeat</keyword>
<keyword id="KW-0915">Sodium</keyword>
<keyword id="KW-0770">Synapse</keyword>
<keyword id="KW-0812">Transmembrane</keyword>
<keyword id="KW-1133">Transmembrane helix</keyword>
<keyword id="KW-0813">Transport</keyword>
<evidence type="ECO:0000250" key="1">
    <source>
        <dbReference type="UniProtKB" id="O35433"/>
    </source>
</evidence>
<evidence type="ECO:0000250" key="2">
    <source>
        <dbReference type="UniProtKB" id="Q704Y3"/>
    </source>
</evidence>
<evidence type="ECO:0000250" key="3">
    <source>
        <dbReference type="UniProtKB" id="Q8NER1"/>
    </source>
</evidence>
<evidence type="ECO:0000250" key="4">
    <source>
        <dbReference type="UniProtKB" id="Q9R186"/>
    </source>
</evidence>
<evidence type="ECO:0000256" key="5">
    <source>
        <dbReference type="SAM" id="MobiDB-lite"/>
    </source>
</evidence>
<evidence type="ECO:0000269" key="6">
    <source>
    </source>
</evidence>
<evidence type="ECO:0000269" key="7">
    <source>
    </source>
</evidence>
<evidence type="ECO:0000305" key="8"/>
<evidence type="ECO:0000305" key="9">
    <source>
    </source>
</evidence>
<organism>
    <name type="scientific">Oryctolagus cuniculus</name>
    <name type="common">Rabbit</name>
    <dbReference type="NCBI Taxonomy" id="9986"/>
    <lineage>
        <taxon>Eukaryota</taxon>
        <taxon>Metazoa</taxon>
        <taxon>Chordata</taxon>
        <taxon>Craniata</taxon>
        <taxon>Vertebrata</taxon>
        <taxon>Euteleostomi</taxon>
        <taxon>Mammalia</taxon>
        <taxon>Eutheria</taxon>
        <taxon>Euarchontoglires</taxon>
        <taxon>Glires</taxon>
        <taxon>Lagomorpha</taxon>
        <taxon>Leporidae</taxon>
        <taxon>Oryctolagus</taxon>
    </lineage>
</organism>
<name>TRPV1_RABIT</name>
<sequence>MKRWVSLDSGESEDPLPEDTCPDLLDGDSNAKPPPAKPHIFSTAKSRSRLFGKGDSEETSPMDCSYEEGELAPCPAITVSSVIIVQRSGDGPTCARQLSQDSVAAAGAEKPLKLYDRRRIFEAVAQNNCQELESLLCFLQRSKKRLTDSEFKDPETGKTCLLKAMLNLHSGQNDTIPLLLEIARQTDSLKEFVNASYTDSYYKGQTALHIAIERRNMALVTLLVENGADVQAAANGDFFKKTKGRPGFYFGELPLSLAACTNQLAIVKFLLQNSWQPADISARDSVGNTVLHALVEVADNTPDNTKFVTSMYNEILILGAKLHPTLKLEELINKKGLTPLALAAGSGKIGVLAYILQREILEPECRHLSRKFTEWAYGPVHSSLYDLSCIDTCERNSVLEVIAYSSSETPNRHDMLLVEPLNRLLQDKWDRVVKRIFYFNFFVYCLYMIIFTTAAYYRPVDGLPPYKLRNLPGDYFRVTGEILSVAGGVYFFFRGIQYFLQRRPSMKALFVDSYSEMLFFVQALFMLATVVLYFSHCKEYVATMVFSLALGWINMLYYTRGFQQMGIYAVMIEKMILRDLCRFMFVYLVFLFGFSTAVVTLIEDGKNSSTSAESTSHRWRGFGCRSSDSSYNSLYSTCLELFKFTIGMGDLEFTENYDFKAVFIILLLAYVILTYILLLNMLIALMGETVNKIAQESKSIWKLQRAITILDTEKGFLKCMRKAFRSGKLLQVGYTPDGKDDCRWCFRVDEVNWTTWNTNVGIINEDPGNCEGVKRTLSFSLRSGRVSGRNWKNFALVPLLRDASTRDRHPXPPEDVHLRPFVGSLKPGDAELFKDSVAAAEK</sequence>
<feature type="chain" id="PRO_0000215340" description="Transient receptor potential cation channel subfamily V member 1">
    <location>
        <begin position="1"/>
        <end position="842"/>
    </location>
</feature>
<feature type="topological domain" description="Cytoplasmic" evidence="3">
    <location>
        <begin position="1"/>
        <end position="435"/>
    </location>
</feature>
<feature type="transmembrane region" description="Helical; Name=S1" evidence="3">
    <location>
        <begin position="436"/>
        <end position="457"/>
    </location>
</feature>
<feature type="topological domain" description="Extracellular" evidence="3">
    <location>
        <begin position="458"/>
        <end position="475"/>
    </location>
</feature>
<feature type="transmembrane region" description="Helical; Name=S2" evidence="3">
    <location>
        <begin position="476"/>
        <end position="500"/>
    </location>
</feature>
<feature type="topological domain" description="Cytoplasmic" evidence="3">
    <location>
        <begin position="501"/>
        <end position="513"/>
    </location>
</feature>
<feature type="transmembrane region" description="Helical; Name=S3" evidence="3">
    <location>
        <begin position="514"/>
        <end position="535"/>
    </location>
</feature>
<feature type="topological domain" description="Extracellular" evidence="3">
    <location>
        <begin position="536"/>
        <end position="538"/>
    </location>
</feature>
<feature type="transmembrane region" description="Helical; Name=S4" evidence="3">
    <location>
        <begin position="539"/>
        <end position="559"/>
    </location>
</feature>
<feature type="topological domain" description="Cytoplasmic" evidence="3">
    <location>
        <begin position="560"/>
        <end position="562"/>
    </location>
</feature>
<feature type="transmembrane region" description="Helical; Name=S5" evidence="3">
    <location>
        <begin position="563"/>
        <end position="601"/>
    </location>
</feature>
<feature type="topological domain" description="Extracellular" evidence="3">
    <location>
        <begin position="602"/>
        <end position="633"/>
    </location>
</feature>
<feature type="intramembrane region" description="Pore-forming" evidence="3">
    <location>
        <begin position="634"/>
        <end position="655"/>
    </location>
</feature>
<feature type="topological domain" description="Extracellular" evidence="3">
    <location>
        <begin position="656"/>
        <end position="659"/>
    </location>
</feature>
<feature type="transmembrane region" description="Helical; Name=S6" evidence="3">
    <location>
        <begin position="660"/>
        <end position="686"/>
    </location>
</feature>
<feature type="topological domain" description="Cytoplasmic" evidence="3">
    <location>
        <begin position="687"/>
        <end position="842"/>
    </location>
</feature>
<feature type="repeat" description="ANK 1" evidence="3">
    <location>
        <begin position="113"/>
        <end position="141"/>
    </location>
</feature>
<feature type="repeat" description="ANK 2" evidence="3">
    <location>
        <begin position="156"/>
        <end position="188"/>
    </location>
</feature>
<feature type="repeat" description="ANK 3" evidence="3">
    <location>
        <begin position="206"/>
        <end position="231"/>
    </location>
</feature>
<feature type="repeat" description="ANK 4" evidence="3">
    <location>
        <begin position="252"/>
        <end position="279"/>
    </location>
</feature>
<feature type="repeat" description="ANK 5" evidence="3">
    <location>
        <begin position="288"/>
        <end position="324"/>
    </location>
</feature>
<feature type="repeat" description="ANK 6" evidence="3">
    <location>
        <begin position="338"/>
        <end position="361"/>
    </location>
</feature>
<feature type="repeat" description="ANK 7" evidence="3">
    <location>
        <begin position="396"/>
        <end position="418"/>
    </location>
</feature>
<feature type="region of interest" description="Disordered" evidence="5">
    <location>
        <begin position="1"/>
        <end position="64"/>
    </location>
</feature>
<feature type="region of interest" description="AD" evidence="1">
    <location>
        <begin position="688"/>
        <end position="716"/>
    </location>
</feature>
<feature type="region of interest" description="Interaction with calmodulin" evidence="1">
    <location>
        <begin position="771"/>
        <end position="805"/>
    </location>
</feature>
<feature type="region of interest" description="Required for PIP2-mediated channel inhibition" evidence="1">
    <location>
        <begin position="781"/>
        <end position="796"/>
    </location>
</feature>
<feature type="short sequence motif" description="Selectivity filter" evidence="9">
    <location>
        <begin position="647"/>
        <end position="650"/>
    </location>
</feature>
<feature type="compositionally biased region" description="Acidic residues" evidence="5">
    <location>
        <begin position="10"/>
        <end position="21"/>
    </location>
</feature>
<feature type="binding site" evidence="1">
    <location>
        <position position="118"/>
    </location>
    <ligand>
        <name>ATP</name>
        <dbReference type="ChEBI" id="CHEBI:30616"/>
    </ligand>
</feature>
<feature type="binding site" evidence="1">
    <location>
        <position position="158"/>
    </location>
    <ligand>
        <name>ATP</name>
        <dbReference type="ChEBI" id="CHEBI:30616"/>
    </ligand>
</feature>
<feature type="binding site" evidence="1">
    <location>
        <position position="163"/>
    </location>
    <ligand>
        <name>ATP</name>
        <dbReference type="ChEBI" id="CHEBI:30616"/>
    </ligand>
</feature>
<feature type="binding site" evidence="1">
    <location>
        <position position="167"/>
    </location>
    <ligand>
        <name>ATP</name>
        <dbReference type="ChEBI" id="CHEBI:30616"/>
    </ligand>
</feature>
<feature type="binding site" evidence="1">
    <location>
        <begin position="202"/>
        <end position="205"/>
    </location>
    <ligand>
        <name>ATP</name>
        <dbReference type="ChEBI" id="CHEBI:30616"/>
    </ligand>
</feature>
<feature type="binding site" evidence="1">
    <location>
        <begin position="213"/>
        <end position="214"/>
    </location>
    <ligand>
        <name>ATP</name>
        <dbReference type="ChEBI" id="CHEBI:30616"/>
    </ligand>
</feature>
<feature type="binding site" evidence="1">
    <location>
        <begin position="514"/>
        <end position="515"/>
    </location>
    <ligand>
        <name>resiniferatoxin</name>
        <dbReference type="ChEBI" id="CHEBI:8809"/>
        <note>agonist</note>
    </ligand>
</feature>
<feature type="binding site" evidence="1">
    <location>
        <position position="560"/>
    </location>
    <ligand>
        <name>resiniferatoxin</name>
        <dbReference type="ChEBI" id="CHEBI:8809"/>
        <note>agonist</note>
    </ligand>
</feature>
<feature type="binding site" evidence="3">
    <location>
        <position position="647"/>
    </location>
    <ligand>
        <name>Na(+)</name>
        <dbReference type="ChEBI" id="CHEBI:29101"/>
        <label>1</label>
        <note>ligand shared among four neighboring subunits</note>
    </ligand>
</feature>
<feature type="binding site" evidence="3">
    <location>
        <position position="647"/>
    </location>
    <ligand>
        <name>Na(+)</name>
        <dbReference type="ChEBI" id="CHEBI:29101"/>
        <label>2</label>
        <note>ligand shared among four neighboring subunits</note>
    </ligand>
</feature>
<feature type="binding site" evidence="4">
    <location>
        <position position="650"/>
    </location>
    <ligand>
        <name>Ca(2+)</name>
        <dbReference type="ChEBI" id="CHEBI:29108"/>
        <note>ligand shared between two neighboring subunits</note>
    </ligand>
</feature>
<feature type="modified residue" description="Phosphothreonine; by PKA; in vitro" evidence="1">
    <location>
        <position position="147"/>
    </location>
</feature>
<feature type="modified residue" description="Phosphothreonine; by PKA; in vitro" evidence="1">
    <location>
        <position position="373"/>
    </location>
</feature>
<feature type="modified residue" description="Phosphoserine; by PKC/PRKCE" evidence="1">
    <location>
        <position position="505"/>
    </location>
</feature>
<feature type="modified residue" description="Phosphothreonine" evidence="1">
    <location>
        <position position="708"/>
    </location>
</feature>
<feature type="modified residue" description="Phosphoserine" evidence="1">
    <location>
        <position position="778"/>
    </location>
</feature>
<feature type="modified residue" description="Phosphoserine; by PKC/PRKCE and PKC/PRKCZ" evidence="1">
    <location>
        <position position="804"/>
    </location>
</feature>
<feature type="modified residue" description="Phosphoserine" evidence="1">
    <location>
        <position position="824"/>
    </location>
</feature>
<feature type="glycosylation site" description="N-linked (GlcNAc...) asparagine" evidence="1">
    <location>
        <position position="607"/>
    </location>
</feature>
<feature type="mutagenesis site" description="Reduces sensitivity to capsaicin more than 100-fold; when associated with T-553." evidence="7">
    <original>Y</original>
    <variation>A</variation>
    <location>
        <position position="514"/>
    </location>
</feature>
<feature type="mutagenesis site" description="Confers sensitivity to capsaicin, resiniferatoxin and other vanilloids and confers binding to resiniferatoxin; when associated with T-553." evidence="7">
    <original>L</original>
    <variation>M</variation>
    <location>
        <position position="550"/>
    </location>
</feature>
<feature type="mutagenesis site" description="Confers sensitivity to capsaicin, resiniferatoxin and other vanilloids and confers binding to resiniferatoxin; when associated with M-550. Reduces sensitivity to capsaicin more than 100-fold; when associated with A-514." evidence="7">
    <original>I</original>
    <variation>T</variation>
    <location>
        <position position="553"/>
    </location>
</feature>
<feature type="mutagenesis site" description="Abolishes calcium permeability." evidence="6">
    <original>D</original>
    <variation>A</variation>
    <location>
        <position position="650"/>
    </location>
</feature>
<feature type="mutagenesis site" description="Attenuates calcium permeability." evidence="6">
    <original>D</original>
    <variation>E</variation>
    <variation>N</variation>
    <variation>M</variation>
    <location>
        <position position="650"/>
    </location>
</feature>
<feature type="mutagenesis site" description="Abolishes channel activity." evidence="6">
    <original>D</original>
    <variation>K</variation>
    <location>
        <position position="650"/>
    </location>
</feature>
<comment type="function">
    <text evidence="1 6 7">Non-selective calcium permeant cation channel involved in detection of noxious chemical and thermal stimuli (PubMed:11035011, PubMed:14996838). Seems to mediate proton influx and may be involved in intracellular acidosis in nociceptive neurons. Involved in mediation of inflammatory pain and hyperalgesia. Sensitized by a phosphatidylinositol second messenger system activated by receptor tyrosine kinases, which involves PKC isozymes and PCL. Activation by vanilloids, like capsaicin, and temperatures higher than 42 degrees Celsius (By similarity). Upon activation, exhibits a time- and Ca(2+)-dependent outward rectification, followed by a long-lasting refractory state. Mild extracellular acidic pH (6.5) potentiates channel activation by noxious heat and vanilloids, whereas acidic conditions (pH &lt;6) directly activate the channel. Can be activated by endogenous compounds, including 12-hydroperoxytetraenoic acid and bradykinin. Acts as ionotropic endocannabinoid receptor with central neuromodulatory effects. Triggers a form of long-term depression (TRPV1-LTD) mediated by the endocannabinoid anandamine in the hippocampus and nucleus accumbens by affecting AMPA receptors endocytosis (By similarity).</text>
</comment>
<comment type="catalytic activity">
    <reaction evidence="7">
        <text>Ca(2+)(in) = Ca(2+)(out)</text>
        <dbReference type="Rhea" id="RHEA:29671"/>
        <dbReference type="ChEBI" id="CHEBI:29108"/>
    </reaction>
</comment>
<comment type="catalytic activity">
    <reaction evidence="1">
        <text>Mg(2+)(in) = Mg(2+)(out)</text>
        <dbReference type="Rhea" id="RHEA:29827"/>
        <dbReference type="ChEBI" id="CHEBI:18420"/>
    </reaction>
</comment>
<comment type="catalytic activity">
    <reaction evidence="1">
        <text>Na(+)(in) = Na(+)(out)</text>
        <dbReference type="Rhea" id="RHEA:34963"/>
        <dbReference type="ChEBI" id="CHEBI:29101"/>
    </reaction>
</comment>
<comment type="catalytic activity">
    <reaction evidence="1">
        <text>K(+)(in) = K(+)(out)</text>
        <dbReference type="Rhea" id="RHEA:29463"/>
        <dbReference type="ChEBI" id="CHEBI:29103"/>
    </reaction>
</comment>
<comment type="activity regulation">
    <text evidence="1 2">The channel is sensitized by ATP binding. Repeated stimulation with capsaicin gives rise to progressively smaller responses, due to desensitization. This desensitization is triggered by the influx of calcium ions and is inhibited by elevated ATP levels. Ca(2+) and CALM displace ATP from its binding site and trigger a conformation change that leads to a closed, desensitized channel. The double-knot toxin (DkTx) from the Chinese earth tiger tarantula activates the channel and traps it in an open conformation (By similarity). The Scolopendra mutilans RhTx toxin potentiates the heat activation pathway mediated by this channel by binding to the charge-rich outer pore region (in an activated state) (By similarity). Channel activity is activated via the interaction with PIRT and phosphatidylinositol 4,5-bisphosphate (PIP2). Both PIRT and PIP2 are required to activate channel activity. Intracellular PIP2 inhibits desensitization (By similarity).</text>
</comment>
<comment type="subunit">
    <text evidence="1 2 3">Homotetramer (By similarity). Interacts with PIRT (By similarity). May also form a heteromeric channel with TRPV3. Interacts with CALM, PRKCM and CSK. Interacts with PRKCG and NTRK1, probably by forming a trimeric complex (By similarity). Interacts with the Scolopendra mutilans RhTx toxin (By similarity). Interacts with TMEM100 (By similarity). Interacts with PACS2 (By similarity).</text>
</comment>
<comment type="subcellular location">
    <subcellularLocation>
        <location evidence="1">Postsynaptic cell membrane</location>
        <topology evidence="1">Multi-pass membrane protein</topology>
    </subcellularLocation>
    <subcellularLocation>
        <location evidence="1">Cell projection</location>
        <location evidence="1">Dendritic spine membrane</location>
        <topology evidence="1">Multi-pass membrane protein</topology>
    </subcellularLocation>
    <subcellularLocation>
        <location evidence="6 7">Cell membrane</location>
        <topology evidence="1">Multi-pass membrane protein</topology>
    </subcellularLocation>
    <text evidence="1">Mostly, but not exclusively expressed in postsynaptic dendritic spines.</text>
</comment>
<comment type="domain">
    <text evidence="1">The association domain (AD) is necessary for self-association.</text>
</comment>
<comment type="PTM">
    <text evidence="1">Phosphorylation by PKA reverses capsaicin-induced dephosphorylation at multiple sites. Phosphorylation by CAMKII seems to regulate binding to vanilloids. Phosphorylated and modulated by PRKCE, PRKCM and probably PRKCZ. Dephosphorylation by calcineurin seems to lead to receptor desensitization and phosphorylation by CAMKII recovers activity.</text>
</comment>
<comment type="similarity">
    <text evidence="8">Belongs to the transient receptor (TC 1.A.4) family. TrpV subfamily. TRPV1 sub-subfamily.</text>
</comment>
<reference key="1">
    <citation type="journal article" date="2004" name="J. Biol. Chem.">
        <title>Molecular determinants of vanilloid sensitivity in TRPV1.</title>
        <authorList>
            <person name="Gavva N.R."/>
            <person name="Klionsky L."/>
            <person name="Qu Y."/>
            <person name="Shi L."/>
            <person name="Tamir R."/>
            <person name="Edenson S."/>
            <person name="Zhang T.J."/>
            <person name="Viswanadhan V.N."/>
            <person name="Toth A."/>
            <person name="Pearce L.V."/>
            <person name="Vanderah T.W."/>
            <person name="Porreca F."/>
            <person name="Blumberg P.M."/>
            <person name="Lile J."/>
            <person name="Sun Y."/>
            <person name="Wild K."/>
            <person name="Louis J.C."/>
            <person name="Treanor J.J."/>
        </authorList>
    </citation>
    <scope>NUCLEOTIDE SEQUENCE [MRNA]</scope>
    <scope>FUNCTION</scope>
    <scope>SUBCELLULAR LOCATION</scope>
    <scope>MUTAGENESIS OF TYR-514; LEU-550 AND ILE-553</scope>
    <scope>TRANSPORTER ACTIVITY</scope>
</reference>
<reference key="2">
    <citation type="journal article" date="2001" name="J. Biol. Chem.">
        <title>The single pore residue Asp542 determines Ca2+ permeation and Mg2+ block of the epithelial Ca2+ channel.</title>
        <authorList>
            <person name="Nilius B."/>
            <person name="Vennekens R."/>
            <person name="Prenen J."/>
            <person name="Hoenderop J.G."/>
            <person name="Droogmans G."/>
            <person name="Bindels R.J.M."/>
        </authorList>
    </citation>
    <scope>FUNCTION</scope>
    <scope>SUBCELLULAR LOCATION</scope>
    <scope>MUTAGENESIS OF ASP-650</scope>
</reference>
<proteinExistence type="evidence at protein level"/>
<accession>Q6RX08</accession>
<dbReference type="EMBL" id="AY487342">
    <property type="protein sequence ID" value="AAR34458.1"/>
    <property type="molecule type" value="mRNA"/>
</dbReference>
<dbReference type="RefSeq" id="NP_001075635.1">
    <property type="nucleotide sequence ID" value="NM_001082166.1"/>
</dbReference>
<dbReference type="EMDB" id="EMD-25722"/>
<dbReference type="FunCoup" id="Q6RX08">
    <property type="interactions" value="58"/>
</dbReference>
<dbReference type="STRING" id="9986.ENSOCUP00000010529"/>
<dbReference type="GlyCosmos" id="Q6RX08">
    <property type="glycosylation" value="1 site, No reported glycans"/>
</dbReference>
<dbReference type="PaxDb" id="9986-ENSOCUP00000010529"/>
<dbReference type="GeneID" id="100008926"/>
<dbReference type="KEGG" id="ocu:100008926"/>
<dbReference type="CTD" id="7442"/>
<dbReference type="eggNOG" id="KOG3676">
    <property type="taxonomic scope" value="Eukaryota"/>
</dbReference>
<dbReference type="InParanoid" id="Q6RX08"/>
<dbReference type="OrthoDB" id="533508at2759"/>
<dbReference type="Proteomes" id="UP000001811">
    <property type="component" value="Unplaced"/>
</dbReference>
<dbReference type="GO" id="GO:0032591">
    <property type="term" value="C:dendritic spine membrane"/>
    <property type="evidence" value="ECO:0007669"/>
    <property type="project" value="UniProtKB-SubCell"/>
</dbReference>
<dbReference type="GO" id="GO:0016020">
    <property type="term" value="C:membrane"/>
    <property type="evidence" value="ECO:0000250"/>
    <property type="project" value="UniProtKB"/>
</dbReference>
<dbReference type="GO" id="GO:0005886">
    <property type="term" value="C:plasma membrane"/>
    <property type="evidence" value="ECO:0000250"/>
    <property type="project" value="UniProtKB"/>
</dbReference>
<dbReference type="GO" id="GO:0045211">
    <property type="term" value="C:postsynaptic membrane"/>
    <property type="evidence" value="ECO:0000250"/>
    <property type="project" value="UniProtKB"/>
</dbReference>
<dbReference type="GO" id="GO:0005524">
    <property type="term" value="F:ATP binding"/>
    <property type="evidence" value="ECO:0000250"/>
    <property type="project" value="UniProtKB"/>
</dbReference>
<dbReference type="GO" id="GO:0005262">
    <property type="term" value="F:calcium channel activity"/>
    <property type="evidence" value="ECO:0000314"/>
    <property type="project" value="UniProtKB"/>
</dbReference>
<dbReference type="GO" id="GO:0005516">
    <property type="term" value="F:calmodulin binding"/>
    <property type="evidence" value="ECO:0000250"/>
    <property type="project" value="UniProtKB"/>
</dbReference>
<dbReference type="GO" id="GO:0005231">
    <property type="term" value="F:excitatory extracellular ligand-gated monoatomic ion channel activity"/>
    <property type="evidence" value="ECO:0000250"/>
    <property type="project" value="UniProtKB"/>
</dbReference>
<dbReference type="GO" id="GO:0005230">
    <property type="term" value="F:extracellular ligand-gated monoatomic ion channel activity"/>
    <property type="evidence" value="ECO:0000250"/>
    <property type="project" value="UniProtKB"/>
</dbReference>
<dbReference type="GO" id="GO:0015278">
    <property type="term" value="F:intracellularly gated calcium channel activity"/>
    <property type="evidence" value="ECO:0000250"/>
    <property type="project" value="UniProtKB"/>
</dbReference>
<dbReference type="GO" id="GO:0046872">
    <property type="term" value="F:metal ion binding"/>
    <property type="evidence" value="ECO:0007669"/>
    <property type="project" value="UniProtKB-KW"/>
</dbReference>
<dbReference type="GO" id="GO:0035091">
    <property type="term" value="F:phosphatidylinositol binding"/>
    <property type="evidence" value="ECO:0000250"/>
    <property type="project" value="UniProtKB"/>
</dbReference>
<dbReference type="GO" id="GO:0004888">
    <property type="term" value="F:transmembrane signaling receptor activity"/>
    <property type="evidence" value="ECO:0000250"/>
    <property type="project" value="UniProtKB"/>
</dbReference>
<dbReference type="GO" id="GO:0098703">
    <property type="term" value="P:calcium ion import across plasma membrane"/>
    <property type="evidence" value="ECO:0000250"/>
    <property type="project" value="UniProtKB"/>
</dbReference>
<dbReference type="GO" id="GO:0070588">
    <property type="term" value="P:calcium ion transmembrane transport"/>
    <property type="evidence" value="ECO:0000250"/>
    <property type="project" value="UniProtKB"/>
</dbReference>
<dbReference type="GO" id="GO:0071468">
    <property type="term" value="P:cellular response to acidic pH"/>
    <property type="evidence" value="ECO:0000250"/>
    <property type="project" value="UniProtKB"/>
</dbReference>
<dbReference type="GO" id="GO:0071312">
    <property type="term" value="P:cellular response to alkaloid"/>
    <property type="evidence" value="ECO:0000250"/>
    <property type="project" value="UniProtKB"/>
</dbReference>
<dbReference type="GO" id="GO:0071318">
    <property type="term" value="P:cellular response to ATP"/>
    <property type="evidence" value="ECO:0000250"/>
    <property type="project" value="UniProtKB"/>
</dbReference>
<dbReference type="GO" id="GO:0034605">
    <property type="term" value="P:cellular response to heat"/>
    <property type="evidence" value="ECO:0000250"/>
    <property type="project" value="UniProtKB"/>
</dbReference>
<dbReference type="GO" id="GO:0051289">
    <property type="term" value="P:protein homotetramerization"/>
    <property type="evidence" value="ECO:0000250"/>
    <property type="project" value="UniProtKB"/>
</dbReference>
<dbReference type="GO" id="GO:1901594">
    <property type="term" value="P:response to capsazepine"/>
    <property type="evidence" value="ECO:0000250"/>
    <property type="project" value="UniProtKB"/>
</dbReference>
<dbReference type="CDD" id="cd22196">
    <property type="entry name" value="TRPV1"/>
    <property type="match status" value="1"/>
</dbReference>
<dbReference type="FunFam" id="1.10.287.70:FF:000074">
    <property type="entry name" value="Transient receptor potential cation channel subfamily V member 1"/>
    <property type="match status" value="1"/>
</dbReference>
<dbReference type="FunFam" id="1.25.40.20:FF:000018">
    <property type="entry name" value="Transient receptor potential cation channel subfamily V member 1"/>
    <property type="match status" value="1"/>
</dbReference>
<dbReference type="Gene3D" id="1.10.287.70">
    <property type="match status" value="1"/>
</dbReference>
<dbReference type="Gene3D" id="1.25.40.20">
    <property type="entry name" value="Ankyrin repeat-containing domain"/>
    <property type="match status" value="1"/>
</dbReference>
<dbReference type="InterPro" id="IPR002110">
    <property type="entry name" value="Ankyrin_rpt"/>
</dbReference>
<dbReference type="InterPro" id="IPR036770">
    <property type="entry name" value="Ankyrin_rpt-contain_sf"/>
</dbReference>
<dbReference type="InterPro" id="IPR005821">
    <property type="entry name" value="Ion_trans_dom"/>
</dbReference>
<dbReference type="InterPro" id="IPR024862">
    <property type="entry name" value="TRPV"/>
</dbReference>
<dbReference type="InterPro" id="IPR008347">
    <property type="entry name" value="TrpV1-4"/>
</dbReference>
<dbReference type="NCBIfam" id="TIGR00870">
    <property type="entry name" value="trp"/>
    <property type="match status" value="1"/>
</dbReference>
<dbReference type="PANTHER" id="PTHR10582:SF17">
    <property type="entry name" value="TRANSIENT RECEPTOR POTENTIAL CATION CHANNEL SUBFAMILY V MEMBER 1"/>
    <property type="match status" value="1"/>
</dbReference>
<dbReference type="PANTHER" id="PTHR10582">
    <property type="entry name" value="TRANSIENT RECEPTOR POTENTIAL ION CHANNEL PROTEIN"/>
    <property type="match status" value="1"/>
</dbReference>
<dbReference type="Pfam" id="PF00023">
    <property type="entry name" value="Ank"/>
    <property type="match status" value="1"/>
</dbReference>
<dbReference type="Pfam" id="PF12796">
    <property type="entry name" value="Ank_2"/>
    <property type="match status" value="1"/>
</dbReference>
<dbReference type="Pfam" id="PF00520">
    <property type="entry name" value="Ion_trans"/>
    <property type="match status" value="1"/>
</dbReference>
<dbReference type="PRINTS" id="PR01768">
    <property type="entry name" value="TRPVRECEPTOR"/>
</dbReference>
<dbReference type="SMART" id="SM00248">
    <property type="entry name" value="ANK"/>
    <property type="match status" value="4"/>
</dbReference>
<dbReference type="SUPFAM" id="SSF48403">
    <property type="entry name" value="Ankyrin repeat"/>
    <property type="match status" value="1"/>
</dbReference>
<dbReference type="PROSITE" id="PS50297">
    <property type="entry name" value="ANK_REP_REGION"/>
    <property type="match status" value="1"/>
</dbReference>
<dbReference type="PROSITE" id="PS50088">
    <property type="entry name" value="ANK_REPEAT"/>
    <property type="match status" value="1"/>
</dbReference>